<sequence length="1853" mass="196833">MRKVISMLLVVAMLTTIFAAMIPQTVSAATMTVEIGKVTAAVGSKVEIPITLKGVPSKGMANCDFVLGYDPNVLEVTEVKPGSIIKDPDPSKSFDSAIYPDRKMIVFLFAEDSGRGTYAITQDGVFATIVATVKSAAAAPITLLEVGAFADNDLVEISTTFVAGGVNLGSSVPTTQPNVPSDGVVVEIGKVTGSVGTTVEIPVYFRGVPSKGIANCDFVFRYDPNVLEIIGIDPGDIIVDPNPTKSFDTAIYPDRKIIVFLFAEDSGTGAYAITKDGVFAKIRATVKSSAPGYITFDEVGGFADNDLVEQKVSFIDGGVNVGNATPTKGATPTNTATPTKSATATPTRPSVPTNTPTNTPANTPVSGNLKVEFYNSNPSDTTNSINPQFKVTNTGSSAIDLSKLTLRYYYTVDGQKDQTFWCDHAAIIGSNGSYNGITSNVKGTFVKMSSSTNNADTYLEISFTGGTLEPGAHVQIQGRFAKNDWSNYTQSNDYSFKSASQFVEWDQVTAYLNGVLVWGKEPGGSVVPSTQPVTTPPATTKPPATTKPPATTIPPSDDPNAIKIKVDTVNAKPGDTVNIPVRFSGIPSKGIANCDFVYSYDPNVLEIIEIKPGELIVDPNPDKSFDTAVYPDRKIIVFLFAEDSGTGAYAITKDGVFATIVAKVKSGAPNGLSVIKFVEVGGFANNDLVEQRTQFFDGGVNVGDTTVPTTPTTPVTTPTDDSNAVRIKVDTVNAKPGDTVRIPVRFSGIPSKGIANCDFVYSYDPNVLEIIEIEPGDIIVDPNPDKSFDTAVYPDRKIIVFLFAEDSGTGAYAITKDGVFATIVAKVKSGAPNGLSVIKFVEVGGFANNDLVEQKTQFFDGGVNVGDTTEPATPTTPVTTPTTTDDLDAVRIKVDTVNAKPGDTVRIPVRFSGIPSKGIANCDFVYSYDPNVLEIIEIEPGDIIVDPNPDKSFDTAVYPDRKIIVFLFAEDSGTGAYAITKDGVFATIVAKVKSGAPNGLSVIKFVEVGGFANNDLVEQKTQFFDGGVNVGDTTEPATPTTPVTTPTTTDDLDAVRIKVDTVNAKPGDTVRIPVRFSGIPSKGIANCDFVYSYDPNVLEIIEIEPGDIIVDPNPDKSFDTAVYPDRKIIVFLFAEDSGTGAYAITKDGVFATIVAKVKEGAPNGLSVIKFVEVGGFANNDLVEQKTQFFDGGVNVGDTTEPATPTTPVTTPTTTDDLDAVRIKVDTVNAKPGDTVRIPVRFSGIPSKGIANCDFVYSYDPNVLEIIEIEPGELIVDPNPTKSFDTAVYPDRKMIVFLFAEDSGTGAYAITEDGVFATIVAKVKSGAPNGLSVIKFVEVGGFANNDLVEQKTQFFDGGVNVGDTTEPATPTTPVTTPTTTDDLDAVRIKVDTVNAKPGDTVRIPVRFSGIPSKGIANCDFVYSYDPNVLEIIEIEPGDIIVDPNPDKSFDTAVYPDRKIIVFLFAEDSGTGAYAITKDGVFATIVAKVKEGAPNGLSVIKFVEVGGFANNDLVEQKTQFFDGGVNVGDTTVPTTSPTTTPPEPTITPNKLTLKIGRAEGRPGDTVEIPVNLYGVPQKGIASGDFVVSYDPNVLEIIEIEPGELIVDPNPTKSFDTAVYPDRKMIVFLFAEDSGTGAYAITEDGVFATIVAKVKEGAPEGFSAIEISEFGAFADNDLVEVETDLINGGVLVTNKPVIEGYKVSGYILPDFSFDATVAPLVKAGFKVEIVGTELYAVTDANGYFEITGVPANASGYTLKISRATYLDRVIANVVVTGDTSVSTSQAPIMMWVGDIVKDNSINLLDVAEVIRCFNATKGSANYVEELDINRNGAINMQDIMIVHKHFGATSSDYDAQ</sequence>
<keyword id="KW-0002">3D-structure</keyword>
<keyword id="KW-0119">Carbohydrate metabolism</keyword>
<keyword id="KW-0961">Cell wall biogenesis/degradation</keyword>
<keyword id="KW-0136">Cellulose degradation</keyword>
<keyword id="KW-0903">Direct protein sequencing</keyword>
<keyword id="KW-0325">Glycoprotein</keyword>
<keyword id="KW-0624">Polysaccharide degradation</keyword>
<keyword id="KW-1185">Reference proteome</keyword>
<keyword id="KW-0677">Repeat</keyword>
<keyword id="KW-0964">Secreted</keyword>
<keyword id="KW-0732">Signal</keyword>
<proteinExistence type="evidence at protein level"/>
<accession>Q06851</accession>
<accession>A3DJZ4</accession>
<reference key="1">
    <citation type="journal article" date="1993" name="Mol. Microbiol.">
        <title>Sequencing of a Clostridium thermocellum gene (cipA) encoding the cellulosomal SL-protein reveals an unusual degree of internal homology.</title>
        <authorList>
            <person name="Gerngross U.T."/>
            <person name="Romaniec M.P.M."/>
            <person name="Kobayashi T."/>
            <person name="Huskisson N.S."/>
            <person name="Demain A.L."/>
        </authorList>
    </citation>
    <scope>NUCLEOTIDE SEQUENCE [GENOMIC DNA]</scope>
    <scope>PROTEIN SEQUENCE OF 29-40 AND 42-43</scope>
</reference>
<reference key="2">
    <citation type="submission" date="2007-02" db="EMBL/GenBank/DDBJ databases">
        <title>Complete sequence of Clostridium thermocellum ATCC 27405.</title>
        <authorList>
            <consortium name="US DOE Joint Genome Institute"/>
            <person name="Copeland A."/>
            <person name="Lucas S."/>
            <person name="Lapidus A."/>
            <person name="Barry K."/>
            <person name="Detter J.C."/>
            <person name="Glavina del Rio T."/>
            <person name="Hammon N."/>
            <person name="Israni S."/>
            <person name="Dalin E."/>
            <person name="Tice H."/>
            <person name="Pitluck S."/>
            <person name="Chertkov O."/>
            <person name="Brettin T."/>
            <person name="Bruce D."/>
            <person name="Han C."/>
            <person name="Tapia R."/>
            <person name="Gilna P."/>
            <person name="Schmutz J."/>
            <person name="Larimer F."/>
            <person name="Land M."/>
            <person name="Hauser L."/>
            <person name="Kyrpides N."/>
            <person name="Mikhailova N."/>
            <person name="Wu J.H.D."/>
            <person name="Newcomb M."/>
            <person name="Richardson P."/>
        </authorList>
    </citation>
    <scope>NUCLEOTIDE SEQUENCE [LARGE SCALE GENOMIC DNA]</scope>
    <source>
        <strain>ATCC 27405 / DSM 1237 / JCM 9322 / NBRC 103400 / NCIMB 10682 / NRRL B-4536 / VPI 7372</strain>
    </source>
</reference>
<reference key="3">
    <citation type="journal article" date="1993" name="J. Bacteriol.">
        <title>Organization of a Clostridium thermocellum gene cluster encoding the cellulosomal scaffolding protein CipA and a protein possibly involved in attachment of the cellulosome to the cell surface.</title>
        <authorList>
            <person name="Fujino T."/>
            <person name="Beguin P."/>
            <person name="Aubert J.-P."/>
        </authorList>
    </citation>
    <scope>NUCLEOTIDE SEQUENCE [GENOMIC DNA] OF 1820-1853</scope>
</reference>
<reference key="4">
    <citation type="journal article" date="1993" name="J. Biol. Chem.">
        <title>The nature of the carbohydrate-peptide linkage region in glycoproteins from the cellulosomes of Clostridium thermocellum and Bacteroides cellulosolvens.</title>
        <authorList>
            <person name="Gerwig G.J."/>
            <person name="Kamerling J.P."/>
            <person name="Vliegenthart J.F.G."/>
            <person name="Morag E."/>
            <person name="Lamed R."/>
            <person name="Bayer E.A."/>
        </authorList>
    </citation>
    <scope>GLYCOSYLATION</scope>
    <source>
        <strain>YS</strain>
    </source>
</reference>
<reference key="5">
    <citation type="journal article" date="1997" name="Structure">
        <title>A cohesin domain from Clostridium thermocellum: the crystal structure provides new insights into cellulosome assembly.</title>
        <authorList>
            <person name="Shimon L.J.W."/>
            <person name="Bayer E.A."/>
            <person name="Morag E."/>
            <person name="Lamed R."/>
            <person name="Yaron S."/>
            <person name="Shoham Y."/>
            <person name="Frolow F."/>
        </authorList>
    </citation>
    <scope>X-RAY CRYSTALLOGRAPHY (2.15 ANGSTROMS) OF 184-321</scope>
</reference>
<reference key="6">
    <citation type="journal article" date="1996" name="EMBO J.">
        <title>Crystal structure of a bacterial family-III cellulose-binding domain: a general mechanism for attachment to cellulose.</title>
        <authorList>
            <person name="Tormo J."/>
            <person name="Lamed R."/>
            <person name="Chirino A.J."/>
            <person name="Morag E."/>
            <person name="Bayer E.A."/>
            <person name="Shoham Y."/>
            <person name="Steitz T.A."/>
        </authorList>
    </citation>
    <scope>X-RAY CRYSTALLOGRAPHY (1.8 ANGSTROMS) OF 368-522</scope>
</reference>
<reference key="7">
    <citation type="journal article" date="1997" name="J. Mol. Biol.">
        <title>The crystal structure of a type I cohesin domain at 1.7-A resolution.</title>
        <authorList>
            <person name="Tavares G.A."/>
            <person name="Beguin P."/>
            <person name="Alzari P.M."/>
        </authorList>
    </citation>
    <scope>X-RAY CRYSTALLOGRAPHY (1.7 ANGSTROMS) OF 1213-1361</scope>
</reference>
<protein>
    <recommendedName>
        <fullName>Cellulosomal-scaffolding protein A</fullName>
    </recommendedName>
    <alternativeName>
        <fullName>Cellulose-integrating protein A</fullName>
    </alternativeName>
    <alternativeName>
        <fullName>Cellulosomal glycoprotein S1/SL</fullName>
    </alternativeName>
    <alternativeName>
        <fullName>Cohesin</fullName>
    </alternativeName>
</protein>
<comment type="function">
    <text>Acts as a scaffolding protein in the cellulosome. It promotes binding of cellulose to the catalytic domains of the cellulolytic enzymes.</text>
</comment>
<comment type="interaction">
    <interactant intactId="EBI-687595">
        <id>Q06851</id>
    </interactant>
    <interactant intactId="EBI-9021730">
        <id>A3DF10</id>
        <label>Cthe_1307</label>
    </interactant>
    <organismsDiffer>false</organismsDiffer>
    <experiments>2</experiments>
</comment>
<comment type="interaction">
    <interactant intactId="EBI-687595">
        <id>Q06851</id>
    </interactant>
    <interactant intactId="EBI-1037473">
        <id>P51584</id>
        <label>xynY</label>
    </interactant>
    <organismsDiffer>true</organismsDiffer>
    <experiments>5</experiments>
</comment>
<comment type="subcellular location">
    <subcellularLocation>
        <location>Secreted</location>
    </subcellularLocation>
    <text>Remains at the cell surface.</text>
</comment>
<comment type="domain">
    <text>The cohesin domains bind to the dockerin domain born by the catalytic components of the cellulosome.</text>
</comment>
<comment type="PTM">
    <text evidence="4">O-glycosylated on most but not all Thr residues of the linker units. The reducing sugar is galactopyranose.</text>
</comment>
<feature type="signal peptide" evidence="5">
    <location>
        <begin position="1"/>
        <end position="28"/>
    </location>
</feature>
<feature type="chain" id="PRO_0000020932" description="Cellulosomal-scaffolding protein A">
    <location>
        <begin position="29"/>
        <end position="1853"/>
    </location>
</feature>
<feature type="domain" description="Cohesin 1">
    <location>
        <begin position="29"/>
        <end position="182"/>
    </location>
</feature>
<feature type="domain" description="Cohesin 2">
    <location>
        <begin position="183"/>
        <end position="322"/>
    </location>
</feature>
<feature type="domain" description="CBM3" evidence="1">
    <location>
        <begin position="365"/>
        <end position="523"/>
    </location>
</feature>
<feature type="domain" description="Cohesin 3">
    <location>
        <begin position="560"/>
        <end position="704"/>
    </location>
</feature>
<feature type="domain" description="Cohesin 4">
    <location>
        <begin position="724"/>
        <end position="866"/>
    </location>
</feature>
<feature type="domain" description="Cohesin 5">
    <location>
        <begin position="889"/>
        <end position="1031"/>
    </location>
</feature>
<feature type="domain" description="Cohesin 6">
    <location>
        <begin position="1054"/>
        <end position="1196"/>
    </location>
</feature>
<feature type="domain" description="Cohesin 7">
    <location>
        <begin position="1219"/>
        <end position="1361"/>
    </location>
</feature>
<feature type="domain" description="Cohesin 8">
    <location>
        <begin position="1384"/>
        <end position="1526"/>
    </location>
</feature>
<feature type="domain" description="Cohesin 9">
    <location>
        <begin position="1548"/>
        <end position="1690"/>
    </location>
</feature>
<feature type="domain" description="Dockerin" evidence="2">
    <location>
        <begin position="1785"/>
        <end position="1852"/>
    </location>
</feature>
<feature type="region of interest" description="Disordered" evidence="3">
    <location>
        <begin position="323"/>
        <end position="367"/>
    </location>
</feature>
<feature type="region of interest" description="Linker (Pro/Thr-rich)">
    <location>
        <begin position="323"/>
        <end position="363"/>
    </location>
</feature>
<feature type="region of interest" description="Linker (Pro/Thr-rich)">
    <location>
        <begin position="523"/>
        <end position="559"/>
    </location>
</feature>
<feature type="region of interest" description="Disordered" evidence="3">
    <location>
        <begin position="525"/>
        <end position="559"/>
    </location>
</feature>
<feature type="compositionally biased region" description="Low complexity" evidence="3">
    <location>
        <begin position="323"/>
        <end position="364"/>
    </location>
</feature>
<feature type="compositionally biased region" description="Low complexity" evidence="3">
    <location>
        <begin position="525"/>
        <end position="555"/>
    </location>
</feature>
<feature type="sequence conflict" description="In Ref. 1; AA sequence." evidence="6" ref="1">
    <original>A</original>
    <variation>AA</variation>
    <location>
        <position position="1615"/>
    </location>
</feature>
<feature type="strand" evidence="9">
    <location>
        <begin position="184"/>
        <end position="188"/>
    </location>
</feature>
<feature type="strand" evidence="9">
    <location>
        <begin position="198"/>
        <end position="207"/>
    </location>
</feature>
<feature type="strand" evidence="9">
    <location>
        <begin position="213"/>
        <end position="221"/>
    </location>
</feature>
<feature type="turn" evidence="9">
    <location>
        <begin position="224"/>
        <end position="226"/>
    </location>
</feature>
<feature type="strand" evidence="9">
    <location>
        <begin position="227"/>
        <end position="234"/>
    </location>
</feature>
<feature type="helix" evidence="9">
    <location>
        <begin position="243"/>
        <end position="245"/>
    </location>
</feature>
<feature type="strand" evidence="9">
    <location>
        <begin position="247"/>
        <end position="252"/>
    </location>
</feature>
<feature type="turn" evidence="9">
    <location>
        <begin position="253"/>
        <end position="256"/>
    </location>
</feature>
<feature type="strand" evidence="9">
    <location>
        <begin position="257"/>
        <end position="263"/>
    </location>
</feature>
<feature type="strand" evidence="9">
    <location>
        <begin position="265"/>
        <end position="269"/>
    </location>
</feature>
<feature type="strand" evidence="9">
    <location>
        <begin position="277"/>
        <end position="286"/>
    </location>
</feature>
<feature type="strand" evidence="8">
    <location>
        <begin position="288"/>
        <end position="290"/>
    </location>
</feature>
<feature type="strand" evidence="9">
    <location>
        <begin position="292"/>
        <end position="303"/>
    </location>
</feature>
<feature type="strand" evidence="9">
    <location>
        <begin position="312"/>
        <end position="315"/>
    </location>
</feature>
<feature type="strand" evidence="9">
    <location>
        <begin position="317"/>
        <end position="320"/>
    </location>
</feature>
<feature type="strand" evidence="11">
    <location>
        <begin position="369"/>
        <end position="376"/>
    </location>
</feature>
<feature type="strand" evidence="11">
    <location>
        <begin position="380"/>
        <end position="383"/>
    </location>
</feature>
<feature type="strand" evidence="11">
    <location>
        <begin position="387"/>
        <end position="393"/>
    </location>
</feature>
<feature type="strand" evidence="11">
    <location>
        <begin position="395"/>
        <end position="397"/>
    </location>
</feature>
<feature type="helix" evidence="11">
    <location>
        <begin position="401"/>
        <end position="403"/>
    </location>
</feature>
<feature type="strand" evidence="11">
    <location>
        <begin position="404"/>
        <end position="410"/>
    </location>
</feature>
<feature type="strand" evidence="11">
    <location>
        <begin position="418"/>
        <end position="428"/>
    </location>
</feature>
<feature type="strand" evidence="11">
    <location>
        <begin position="434"/>
        <end position="436"/>
    </location>
</feature>
<feature type="helix" evidence="11">
    <location>
        <begin position="438"/>
        <end position="440"/>
    </location>
</feature>
<feature type="strand" evidence="11">
    <location>
        <begin position="441"/>
        <end position="452"/>
    </location>
</feature>
<feature type="strand" evidence="11">
    <location>
        <begin position="455"/>
        <end position="465"/>
    </location>
</feature>
<feature type="strand" evidence="11">
    <location>
        <begin position="473"/>
        <end position="482"/>
    </location>
</feature>
<feature type="strand" evidence="11">
    <location>
        <begin position="488"/>
        <end position="490"/>
    </location>
</feature>
<feature type="strand" evidence="11">
    <location>
        <begin position="508"/>
        <end position="512"/>
    </location>
</feature>
<feature type="strand" evidence="11">
    <location>
        <begin position="515"/>
        <end position="518"/>
    </location>
</feature>
<feature type="strand" evidence="7">
    <location>
        <begin position="1220"/>
        <end position="1224"/>
    </location>
</feature>
<feature type="strand" evidence="7">
    <location>
        <begin position="1226"/>
        <end position="1229"/>
    </location>
</feature>
<feature type="strand" evidence="7">
    <location>
        <begin position="1234"/>
        <end position="1243"/>
    </location>
</feature>
<feature type="strand" evidence="7">
    <location>
        <begin position="1249"/>
        <end position="1257"/>
    </location>
</feature>
<feature type="turn" evidence="7">
    <location>
        <begin position="1260"/>
        <end position="1262"/>
    </location>
</feature>
<feature type="strand" evidence="7">
    <location>
        <begin position="1263"/>
        <end position="1270"/>
    </location>
</feature>
<feature type="helix" evidence="7">
    <location>
        <begin position="1279"/>
        <end position="1282"/>
    </location>
</feature>
<feature type="strand" evidence="7">
    <location>
        <begin position="1283"/>
        <end position="1288"/>
    </location>
</feature>
<feature type="turn" evidence="7">
    <location>
        <begin position="1289"/>
        <end position="1292"/>
    </location>
</feature>
<feature type="strand" evidence="7">
    <location>
        <begin position="1293"/>
        <end position="1299"/>
    </location>
</feature>
<feature type="strand" evidence="7">
    <location>
        <begin position="1303"/>
        <end position="1305"/>
    </location>
</feature>
<feature type="strand" evidence="7">
    <location>
        <begin position="1311"/>
        <end position="1322"/>
    </location>
</feature>
<feature type="strand" evidence="7">
    <location>
        <begin position="1328"/>
        <end position="1342"/>
    </location>
</feature>
<feature type="strand" evidence="7">
    <location>
        <begin position="1351"/>
        <end position="1354"/>
    </location>
</feature>
<feature type="strand" evidence="7">
    <location>
        <begin position="1356"/>
        <end position="1360"/>
    </location>
</feature>
<feature type="strand" evidence="10">
    <location>
        <begin position="1550"/>
        <end position="1553"/>
    </location>
</feature>
<feature type="strand" evidence="10">
    <location>
        <begin position="1555"/>
        <end position="1558"/>
    </location>
</feature>
<feature type="strand" evidence="10">
    <location>
        <begin position="1563"/>
        <end position="1572"/>
    </location>
</feature>
<feature type="strand" evidence="10">
    <location>
        <begin position="1580"/>
        <end position="1586"/>
    </location>
</feature>
<feature type="turn" evidence="10">
    <location>
        <begin position="1589"/>
        <end position="1591"/>
    </location>
</feature>
<feature type="strand" evidence="10">
    <location>
        <begin position="1592"/>
        <end position="1599"/>
    </location>
</feature>
<feature type="helix" evidence="10">
    <location>
        <begin position="1608"/>
        <end position="1610"/>
    </location>
</feature>
<feature type="strand" evidence="10">
    <location>
        <begin position="1612"/>
        <end position="1617"/>
    </location>
</feature>
<feature type="helix" evidence="10">
    <location>
        <begin position="1618"/>
        <end position="1620"/>
    </location>
</feature>
<feature type="strand" evidence="10">
    <location>
        <begin position="1622"/>
        <end position="1628"/>
    </location>
</feature>
<feature type="strand" evidence="10">
    <location>
        <begin position="1632"/>
        <end position="1634"/>
    </location>
</feature>
<feature type="strand" evidence="10">
    <location>
        <begin position="1642"/>
        <end position="1651"/>
    </location>
</feature>
<feature type="strand" evidence="10">
    <location>
        <begin position="1658"/>
        <end position="1671"/>
    </location>
</feature>
<feature type="strand" evidence="10">
    <location>
        <begin position="1681"/>
        <end position="1683"/>
    </location>
</feature>
<feature type="strand" evidence="10">
    <location>
        <begin position="1685"/>
        <end position="1689"/>
    </location>
</feature>
<feature type="strand" evidence="10">
    <location>
        <begin position="1696"/>
        <end position="1708"/>
    </location>
</feature>
<feature type="turn" evidence="10">
    <location>
        <begin position="1712"/>
        <end position="1714"/>
    </location>
</feature>
<feature type="helix" evidence="10">
    <location>
        <begin position="1715"/>
        <end position="1719"/>
    </location>
</feature>
<feature type="strand" evidence="10">
    <location>
        <begin position="1723"/>
        <end position="1726"/>
    </location>
</feature>
<feature type="strand" evidence="10">
    <location>
        <begin position="1732"/>
        <end position="1734"/>
    </location>
</feature>
<feature type="strand" evidence="10">
    <location>
        <begin position="1739"/>
        <end position="1746"/>
    </location>
</feature>
<feature type="strand" evidence="10">
    <location>
        <begin position="1749"/>
        <end position="1758"/>
    </location>
</feature>
<feature type="strand" evidence="12">
    <location>
        <begin position="1761"/>
        <end position="1763"/>
    </location>
</feature>
<feature type="strand" evidence="10">
    <location>
        <begin position="1765"/>
        <end position="1774"/>
    </location>
</feature>
<feature type="strand" evidence="10">
    <location>
        <begin position="1781"/>
        <end position="1783"/>
    </location>
</feature>
<feature type="strand" evidence="10">
    <location>
        <begin position="1785"/>
        <end position="1787"/>
    </location>
</feature>
<feature type="strand" evidence="10">
    <location>
        <begin position="1789"/>
        <end position="1791"/>
    </location>
</feature>
<feature type="strand" evidence="10">
    <location>
        <begin position="1793"/>
        <end position="1797"/>
    </location>
</feature>
<feature type="helix" evidence="10">
    <location>
        <begin position="1800"/>
        <end position="1807"/>
    </location>
</feature>
<feature type="turn" evidence="10">
    <location>
        <begin position="1808"/>
        <end position="1811"/>
    </location>
</feature>
<feature type="helix" evidence="10">
    <location>
        <begin position="1821"/>
        <end position="1823"/>
    </location>
</feature>
<feature type="strand" evidence="12">
    <location>
        <begin position="1824"/>
        <end position="1826"/>
    </location>
</feature>
<feature type="strand" evidence="10">
    <location>
        <begin position="1828"/>
        <end position="1830"/>
    </location>
</feature>
<feature type="helix" evidence="10">
    <location>
        <begin position="1833"/>
        <end position="1840"/>
    </location>
</feature>
<feature type="turn" evidence="10">
    <location>
        <begin position="1841"/>
        <end position="1844"/>
    </location>
</feature>
<feature type="helix" evidence="10">
    <location>
        <begin position="1847"/>
        <end position="1849"/>
    </location>
</feature>
<gene>
    <name type="primary">cipA</name>
    <name type="ordered locus">Cthe_3077</name>
</gene>
<organism>
    <name type="scientific">Acetivibrio thermocellus (strain ATCC 27405 / DSM 1237 / JCM 9322 / NBRC 103400 / NCIMB 10682 / NRRL B-4536 / VPI 7372)</name>
    <name type="common">Clostridium thermocellum</name>
    <dbReference type="NCBI Taxonomy" id="203119"/>
    <lineage>
        <taxon>Bacteria</taxon>
        <taxon>Bacillati</taxon>
        <taxon>Bacillota</taxon>
        <taxon>Clostridia</taxon>
        <taxon>Eubacteriales</taxon>
        <taxon>Oscillospiraceae</taxon>
        <taxon>Acetivibrio</taxon>
    </lineage>
</organism>
<dbReference type="EMBL" id="L08665">
    <property type="status" value="NOT_ANNOTATED_CDS"/>
    <property type="molecule type" value="Genomic_DNA"/>
</dbReference>
<dbReference type="EMBL" id="CP000568">
    <property type="protein sequence ID" value="ABN54273.1"/>
    <property type="molecule type" value="Genomic_DNA"/>
</dbReference>
<dbReference type="EMBL" id="X67506">
    <property type="protein sequence ID" value="CAA47840.1"/>
    <property type="molecule type" value="Genomic_DNA"/>
</dbReference>
<dbReference type="PIR" id="S36859">
    <property type="entry name" value="S36859"/>
</dbReference>
<dbReference type="RefSeq" id="WP_020458017.1">
    <property type="nucleotide sequence ID" value="NC_009012.1"/>
</dbReference>
<dbReference type="PDB" id="1ANU">
    <property type="method" value="X-ray"/>
    <property type="resolution" value="2.15 A"/>
    <property type="chains" value="A=184-321"/>
</dbReference>
<dbReference type="PDB" id="1AOH">
    <property type="method" value="X-ray"/>
    <property type="resolution" value="1.70 A"/>
    <property type="chains" value="A/B=1216-1361"/>
</dbReference>
<dbReference type="PDB" id="1NBC">
    <property type="method" value="X-ray"/>
    <property type="resolution" value="1.75 A"/>
    <property type="chains" value="A/B=368-522"/>
</dbReference>
<dbReference type="PDB" id="1OHZ">
    <property type="method" value="X-ray"/>
    <property type="resolution" value="2.20 A"/>
    <property type="chains" value="A=181-340"/>
</dbReference>
<dbReference type="PDB" id="2B59">
    <property type="method" value="X-ray"/>
    <property type="resolution" value="2.11 A"/>
    <property type="chains" value="B=1691-1853"/>
</dbReference>
<dbReference type="PDB" id="2CCL">
    <property type="method" value="X-ray"/>
    <property type="resolution" value="2.03 A"/>
    <property type="chains" value="A/C=181-328"/>
</dbReference>
<dbReference type="PDB" id="3KCP">
    <property type="method" value="X-ray"/>
    <property type="resolution" value="1.94 A"/>
    <property type="chains" value="A=1542-1853"/>
</dbReference>
<dbReference type="PDB" id="4B9F">
    <property type="method" value="X-ray"/>
    <property type="resolution" value="1.19 A"/>
    <property type="chains" value="A/B=368-519"/>
</dbReference>
<dbReference type="PDB" id="5G5D">
    <property type="method" value="X-ray"/>
    <property type="resolution" value="3.00 A"/>
    <property type="chains" value="B=1691-1853"/>
</dbReference>
<dbReference type="PDBsum" id="1ANU"/>
<dbReference type="PDBsum" id="1AOH"/>
<dbReference type="PDBsum" id="1NBC"/>
<dbReference type="PDBsum" id="1OHZ"/>
<dbReference type="PDBsum" id="2B59"/>
<dbReference type="PDBsum" id="2CCL"/>
<dbReference type="PDBsum" id="3KCP"/>
<dbReference type="PDBsum" id="4B9F"/>
<dbReference type="PDBsum" id="5G5D"/>
<dbReference type="SMR" id="Q06851"/>
<dbReference type="DIP" id="DIP-42322N"/>
<dbReference type="IntAct" id="Q06851">
    <property type="interactions" value="13"/>
</dbReference>
<dbReference type="MINT" id="Q06851"/>
<dbReference type="STRING" id="203119.Cthe_3077"/>
<dbReference type="CAZy" id="CBM3">
    <property type="family name" value="Carbohydrate-Binding Module Family 3"/>
</dbReference>
<dbReference type="GlyConnect" id="84">
    <property type="glycosylation" value="1 O-Gal glycan, 6 O-Linked glycans"/>
</dbReference>
<dbReference type="GlyCosmos" id="Q06851">
    <property type="glycosylation" value="No site information, 10 glycans"/>
</dbReference>
<dbReference type="GeneID" id="35803981"/>
<dbReference type="KEGG" id="cth:Cthe_3077"/>
<dbReference type="eggNOG" id="COG2911">
    <property type="taxonomic scope" value="Bacteria"/>
</dbReference>
<dbReference type="HOGENOM" id="CLU_002254_0_0_9"/>
<dbReference type="OrthoDB" id="2084974at2"/>
<dbReference type="BioCyc" id="MetaCyc:MONOMER-16412"/>
<dbReference type="CD-CODE" id="A310D5D6">
    <property type="entry name" value="Synthetic Condensate 000126"/>
</dbReference>
<dbReference type="EvolutionaryTrace" id="Q06851"/>
<dbReference type="Proteomes" id="UP000002145">
    <property type="component" value="Chromosome"/>
</dbReference>
<dbReference type="GO" id="GO:0005576">
    <property type="term" value="C:extracellular region"/>
    <property type="evidence" value="ECO:0007669"/>
    <property type="project" value="UniProtKB-SubCell"/>
</dbReference>
<dbReference type="GO" id="GO:0030248">
    <property type="term" value="F:cellulose binding"/>
    <property type="evidence" value="ECO:0007669"/>
    <property type="project" value="InterPro"/>
</dbReference>
<dbReference type="GO" id="GO:0004553">
    <property type="term" value="F:hydrolase activity, hydrolyzing O-glycosyl compounds"/>
    <property type="evidence" value="ECO:0007669"/>
    <property type="project" value="InterPro"/>
</dbReference>
<dbReference type="GO" id="GO:0071555">
    <property type="term" value="P:cell wall organization"/>
    <property type="evidence" value="ECO:0007669"/>
    <property type="project" value="UniProtKB-KW"/>
</dbReference>
<dbReference type="GO" id="GO:0030245">
    <property type="term" value="P:cellulose catabolic process"/>
    <property type="evidence" value="ECO:0007669"/>
    <property type="project" value="UniProtKB-KW"/>
</dbReference>
<dbReference type="CDD" id="cd14253">
    <property type="entry name" value="Dockerin"/>
    <property type="match status" value="1"/>
</dbReference>
<dbReference type="CDD" id="cd08548">
    <property type="entry name" value="Type_I_cohesin_like"/>
    <property type="match status" value="9"/>
</dbReference>
<dbReference type="Gene3D" id="2.60.40.4130">
    <property type="match status" value="1"/>
</dbReference>
<dbReference type="Gene3D" id="2.60.40.680">
    <property type="match status" value="9"/>
</dbReference>
<dbReference type="Gene3D" id="2.60.40.710">
    <property type="entry name" value="Endoglucanase-like"/>
    <property type="match status" value="1"/>
</dbReference>
<dbReference type="InterPro" id="IPR008969">
    <property type="entry name" value="CarboxyPept-like_regulatory"/>
</dbReference>
<dbReference type="InterPro" id="IPR008965">
    <property type="entry name" value="CBM2/CBM3_carb-bd_dom_sf"/>
</dbReference>
<dbReference type="InterPro" id="IPR001956">
    <property type="entry name" value="CBM3"/>
</dbReference>
<dbReference type="InterPro" id="IPR036966">
    <property type="entry name" value="CBM3_sf"/>
</dbReference>
<dbReference type="InterPro" id="IPR002102">
    <property type="entry name" value="Cohesin_dom"/>
</dbReference>
<dbReference type="InterPro" id="IPR002105">
    <property type="entry name" value="Dockerin_1_rpt"/>
</dbReference>
<dbReference type="InterPro" id="IPR016134">
    <property type="entry name" value="Dockerin_dom"/>
</dbReference>
<dbReference type="InterPro" id="IPR036439">
    <property type="entry name" value="Dockerin_dom_sf"/>
</dbReference>
<dbReference type="InterPro" id="IPR018247">
    <property type="entry name" value="EF_Hand_1_Ca_BS"/>
</dbReference>
<dbReference type="Pfam" id="PF00942">
    <property type="entry name" value="CBM_3"/>
    <property type="match status" value="1"/>
</dbReference>
<dbReference type="Pfam" id="PF00963">
    <property type="entry name" value="Cohesin"/>
    <property type="match status" value="9"/>
</dbReference>
<dbReference type="Pfam" id="PF00404">
    <property type="entry name" value="Dockerin_1"/>
    <property type="match status" value="1"/>
</dbReference>
<dbReference type="SMART" id="SM01067">
    <property type="entry name" value="CBM_3"/>
    <property type="match status" value="1"/>
</dbReference>
<dbReference type="SUPFAM" id="SSF49384">
    <property type="entry name" value="Carbohydrate-binding domain"/>
    <property type="match status" value="10"/>
</dbReference>
<dbReference type="SUPFAM" id="SSF49464">
    <property type="entry name" value="Carboxypeptidase regulatory domain-like"/>
    <property type="match status" value="1"/>
</dbReference>
<dbReference type="SUPFAM" id="SSF63446">
    <property type="entry name" value="Type I dockerin domain"/>
    <property type="match status" value="1"/>
</dbReference>
<dbReference type="PROSITE" id="PS51172">
    <property type="entry name" value="CBM3"/>
    <property type="match status" value="1"/>
</dbReference>
<dbReference type="PROSITE" id="PS00448">
    <property type="entry name" value="CLOS_CELLULOSOME_RPT"/>
    <property type="match status" value="2"/>
</dbReference>
<dbReference type="PROSITE" id="PS51766">
    <property type="entry name" value="DOCKERIN"/>
    <property type="match status" value="1"/>
</dbReference>
<dbReference type="PROSITE" id="PS00018">
    <property type="entry name" value="EF_HAND_1"/>
    <property type="match status" value="1"/>
</dbReference>
<name>CIPA_ACET2</name>
<evidence type="ECO:0000255" key="1">
    <source>
        <dbReference type="PROSITE-ProRule" id="PRU00513"/>
    </source>
</evidence>
<evidence type="ECO:0000255" key="2">
    <source>
        <dbReference type="PROSITE-ProRule" id="PRU01102"/>
    </source>
</evidence>
<evidence type="ECO:0000256" key="3">
    <source>
        <dbReference type="SAM" id="MobiDB-lite"/>
    </source>
</evidence>
<evidence type="ECO:0000269" key="4">
    <source>
    </source>
</evidence>
<evidence type="ECO:0000269" key="5">
    <source>
    </source>
</evidence>
<evidence type="ECO:0000305" key="6"/>
<evidence type="ECO:0007829" key="7">
    <source>
        <dbReference type="PDB" id="1AOH"/>
    </source>
</evidence>
<evidence type="ECO:0007829" key="8">
    <source>
        <dbReference type="PDB" id="1OHZ"/>
    </source>
</evidence>
<evidence type="ECO:0007829" key="9">
    <source>
        <dbReference type="PDB" id="2CCL"/>
    </source>
</evidence>
<evidence type="ECO:0007829" key="10">
    <source>
        <dbReference type="PDB" id="3KCP"/>
    </source>
</evidence>
<evidence type="ECO:0007829" key="11">
    <source>
        <dbReference type="PDB" id="4B9F"/>
    </source>
</evidence>
<evidence type="ECO:0007829" key="12">
    <source>
        <dbReference type="PDB" id="5G5D"/>
    </source>
</evidence>